<evidence type="ECO:0000255" key="1">
    <source>
        <dbReference type="HAMAP-Rule" id="MF_00607"/>
    </source>
</evidence>
<proteinExistence type="inferred from homology"/>
<feature type="chain" id="PRO_0000101564" description="Ribosomal RNA small subunit methyltransferase A">
    <location>
        <begin position="1"/>
        <end position="272"/>
    </location>
</feature>
<feature type="binding site" evidence="1">
    <location>
        <position position="27"/>
    </location>
    <ligand>
        <name>S-adenosyl-L-methionine</name>
        <dbReference type="ChEBI" id="CHEBI:59789"/>
    </ligand>
</feature>
<feature type="binding site" evidence="1">
    <location>
        <position position="29"/>
    </location>
    <ligand>
        <name>S-adenosyl-L-methionine</name>
        <dbReference type="ChEBI" id="CHEBI:59789"/>
    </ligand>
</feature>
<feature type="binding site" evidence="1">
    <location>
        <position position="54"/>
    </location>
    <ligand>
        <name>S-adenosyl-L-methionine</name>
        <dbReference type="ChEBI" id="CHEBI:59789"/>
    </ligand>
</feature>
<feature type="binding site" evidence="1">
    <location>
        <position position="75"/>
    </location>
    <ligand>
        <name>S-adenosyl-L-methionine</name>
        <dbReference type="ChEBI" id="CHEBI:59789"/>
    </ligand>
</feature>
<feature type="binding site" evidence="1">
    <location>
        <position position="97"/>
    </location>
    <ligand>
        <name>S-adenosyl-L-methionine</name>
        <dbReference type="ChEBI" id="CHEBI:59789"/>
    </ligand>
</feature>
<feature type="binding site" evidence="1">
    <location>
        <position position="117"/>
    </location>
    <ligand>
        <name>S-adenosyl-L-methionine</name>
        <dbReference type="ChEBI" id="CHEBI:59789"/>
    </ligand>
</feature>
<accession>Q8EU92</accession>
<comment type="function">
    <text evidence="1">Specifically dimethylates two adjacent adenosines (A1518 and A1519) in the loop of a conserved hairpin near the 3'-end of 16S rRNA in the 30S particle. May play a critical role in biogenesis of 30S subunits.</text>
</comment>
<comment type="catalytic activity">
    <reaction evidence="1">
        <text>adenosine(1518)/adenosine(1519) in 16S rRNA + 4 S-adenosyl-L-methionine = N(6)-dimethyladenosine(1518)/N(6)-dimethyladenosine(1519) in 16S rRNA + 4 S-adenosyl-L-homocysteine + 4 H(+)</text>
        <dbReference type="Rhea" id="RHEA:19609"/>
        <dbReference type="Rhea" id="RHEA-COMP:10232"/>
        <dbReference type="Rhea" id="RHEA-COMP:10233"/>
        <dbReference type="ChEBI" id="CHEBI:15378"/>
        <dbReference type="ChEBI" id="CHEBI:57856"/>
        <dbReference type="ChEBI" id="CHEBI:59789"/>
        <dbReference type="ChEBI" id="CHEBI:74411"/>
        <dbReference type="ChEBI" id="CHEBI:74493"/>
        <dbReference type="EC" id="2.1.1.182"/>
    </reaction>
</comment>
<comment type="subcellular location">
    <subcellularLocation>
        <location evidence="1">Cytoplasm</location>
    </subcellularLocation>
</comment>
<comment type="similarity">
    <text evidence="1">Belongs to the class I-like SAM-binding methyltransferase superfamily. rRNA adenine N(6)-methyltransferase family. RsmA subfamily.</text>
</comment>
<sequence>MIGKEENKFISFIKKNKFFASRKMGQNFLINENIKKKIVDSLEIKPDDHVLEIGPGFGALTKIVLSQTKNLTVVELDKRLVEFLKQEYKELRIINIDVLKFDFKEFNKDTQYKIISNLPYSISSKIIFKILKYANFSQSVLMVQKEMADRITAKVGTKKYNNFTVLLRITSEIKKLFDVSNNCFFPKPEVDSTVISFERKKDFDFTNFEKLESFLLKCFSQKRKTIFNNLKNYFPKQKIEEVFNKHSIIPTTRPENIKEELYLKMCFDFYDL</sequence>
<dbReference type="EC" id="2.1.1.182" evidence="1"/>
<dbReference type="EMBL" id="BA000026">
    <property type="protein sequence ID" value="BAC44824.1"/>
    <property type="molecule type" value="Genomic_DNA"/>
</dbReference>
<dbReference type="RefSeq" id="WP_011077852.1">
    <property type="nucleotide sequence ID" value="NC_004432.1"/>
</dbReference>
<dbReference type="SMR" id="Q8EU92"/>
<dbReference type="FunCoup" id="Q8EU92">
    <property type="interactions" value="223"/>
</dbReference>
<dbReference type="STRING" id="272633.gene:10732158"/>
<dbReference type="KEGG" id="mpe:MYPE10390"/>
<dbReference type="eggNOG" id="COG0030">
    <property type="taxonomic scope" value="Bacteria"/>
</dbReference>
<dbReference type="HOGENOM" id="CLU_041220_0_2_14"/>
<dbReference type="InParanoid" id="Q8EU92"/>
<dbReference type="Proteomes" id="UP000002522">
    <property type="component" value="Chromosome"/>
</dbReference>
<dbReference type="GO" id="GO:0005829">
    <property type="term" value="C:cytosol"/>
    <property type="evidence" value="ECO:0007669"/>
    <property type="project" value="TreeGrafter"/>
</dbReference>
<dbReference type="GO" id="GO:0052908">
    <property type="term" value="F:16S rRNA (adenine(1518)-N(6)/adenine(1519)-N(6))-dimethyltransferase activity"/>
    <property type="evidence" value="ECO:0007669"/>
    <property type="project" value="UniProtKB-EC"/>
</dbReference>
<dbReference type="GO" id="GO:0003723">
    <property type="term" value="F:RNA binding"/>
    <property type="evidence" value="ECO:0007669"/>
    <property type="project" value="UniProtKB-KW"/>
</dbReference>
<dbReference type="CDD" id="cd02440">
    <property type="entry name" value="AdoMet_MTases"/>
    <property type="match status" value="1"/>
</dbReference>
<dbReference type="Gene3D" id="1.10.8.100">
    <property type="entry name" value="Ribosomal RNA adenine dimethylase-like, domain 2"/>
    <property type="match status" value="1"/>
</dbReference>
<dbReference type="Gene3D" id="3.40.50.150">
    <property type="entry name" value="Vaccinia Virus protein VP39"/>
    <property type="match status" value="1"/>
</dbReference>
<dbReference type="HAMAP" id="MF_00607">
    <property type="entry name" value="16SrRNA_methyltr_A"/>
    <property type="match status" value="1"/>
</dbReference>
<dbReference type="InterPro" id="IPR001737">
    <property type="entry name" value="KsgA/Erm"/>
</dbReference>
<dbReference type="InterPro" id="IPR023165">
    <property type="entry name" value="rRNA_Ade_diMease-like_C"/>
</dbReference>
<dbReference type="InterPro" id="IPR020596">
    <property type="entry name" value="rRNA_Ade_Mease_Trfase_CS"/>
</dbReference>
<dbReference type="InterPro" id="IPR020598">
    <property type="entry name" value="rRNA_Ade_methylase_Trfase_N"/>
</dbReference>
<dbReference type="InterPro" id="IPR011530">
    <property type="entry name" value="rRNA_adenine_dimethylase"/>
</dbReference>
<dbReference type="InterPro" id="IPR029063">
    <property type="entry name" value="SAM-dependent_MTases_sf"/>
</dbReference>
<dbReference type="NCBIfam" id="TIGR00755">
    <property type="entry name" value="ksgA"/>
    <property type="match status" value="1"/>
</dbReference>
<dbReference type="PANTHER" id="PTHR11727">
    <property type="entry name" value="DIMETHYLADENOSINE TRANSFERASE"/>
    <property type="match status" value="1"/>
</dbReference>
<dbReference type="PANTHER" id="PTHR11727:SF7">
    <property type="entry name" value="DIMETHYLADENOSINE TRANSFERASE-RELATED"/>
    <property type="match status" value="1"/>
</dbReference>
<dbReference type="Pfam" id="PF00398">
    <property type="entry name" value="RrnaAD"/>
    <property type="match status" value="1"/>
</dbReference>
<dbReference type="SMART" id="SM00650">
    <property type="entry name" value="rADc"/>
    <property type="match status" value="1"/>
</dbReference>
<dbReference type="SUPFAM" id="SSF53335">
    <property type="entry name" value="S-adenosyl-L-methionine-dependent methyltransferases"/>
    <property type="match status" value="1"/>
</dbReference>
<dbReference type="PROSITE" id="PS01131">
    <property type="entry name" value="RRNA_A_DIMETH"/>
    <property type="match status" value="1"/>
</dbReference>
<dbReference type="PROSITE" id="PS51689">
    <property type="entry name" value="SAM_RNA_A_N6_MT"/>
    <property type="match status" value="1"/>
</dbReference>
<protein>
    <recommendedName>
        <fullName evidence="1">Ribosomal RNA small subunit methyltransferase A</fullName>
        <ecNumber evidence="1">2.1.1.182</ecNumber>
    </recommendedName>
    <alternativeName>
        <fullName evidence="1">16S rRNA (adenine(1518)-N(6)/adenine(1519)-N(6))-dimethyltransferase</fullName>
    </alternativeName>
    <alternativeName>
        <fullName evidence="1">16S rRNA dimethyladenosine transferase</fullName>
    </alternativeName>
    <alternativeName>
        <fullName evidence="1">16S rRNA dimethylase</fullName>
    </alternativeName>
    <alternativeName>
        <fullName evidence="1">S-adenosylmethionine-6-N', N'-adenosyl(rRNA) dimethyltransferase</fullName>
    </alternativeName>
</protein>
<keyword id="KW-0963">Cytoplasm</keyword>
<keyword id="KW-0489">Methyltransferase</keyword>
<keyword id="KW-1185">Reference proteome</keyword>
<keyword id="KW-0694">RNA-binding</keyword>
<keyword id="KW-0698">rRNA processing</keyword>
<keyword id="KW-0949">S-adenosyl-L-methionine</keyword>
<keyword id="KW-0808">Transferase</keyword>
<name>RSMA_MALP2</name>
<gene>
    <name evidence="1" type="primary">rsmA</name>
    <name evidence="1" type="synonym">ksgA</name>
    <name type="ordered locus">MYPE10390</name>
</gene>
<organism>
    <name type="scientific">Malacoplasma penetrans (strain HF-2)</name>
    <name type="common">Mycoplasma penetrans</name>
    <dbReference type="NCBI Taxonomy" id="272633"/>
    <lineage>
        <taxon>Bacteria</taxon>
        <taxon>Bacillati</taxon>
        <taxon>Mycoplasmatota</taxon>
        <taxon>Mycoplasmoidales</taxon>
        <taxon>Mycoplasmoidaceae</taxon>
        <taxon>Malacoplasma</taxon>
    </lineage>
</organism>
<reference key="1">
    <citation type="journal article" date="2002" name="Nucleic Acids Res.">
        <title>The complete genomic sequence of Mycoplasma penetrans, an intracellular bacterial pathogen in humans.</title>
        <authorList>
            <person name="Sasaki Y."/>
            <person name="Ishikawa J."/>
            <person name="Yamashita A."/>
            <person name="Oshima K."/>
            <person name="Kenri T."/>
            <person name="Furuya K."/>
            <person name="Yoshino C."/>
            <person name="Horino A."/>
            <person name="Shiba T."/>
            <person name="Sasaki T."/>
            <person name="Hattori M."/>
        </authorList>
    </citation>
    <scope>NUCLEOTIDE SEQUENCE [LARGE SCALE GENOMIC DNA]</scope>
    <source>
        <strain>HF-2</strain>
    </source>
</reference>